<reference key="1">
    <citation type="journal article" date="2006" name="J. Bacteriol.">
        <title>Pathogenomic sequence analysis of Bacillus cereus and Bacillus thuringiensis isolates closely related to Bacillus anthracis.</title>
        <authorList>
            <person name="Han C.S."/>
            <person name="Xie G."/>
            <person name="Challacombe J.F."/>
            <person name="Altherr M.R."/>
            <person name="Bhotika S.S."/>
            <person name="Bruce D."/>
            <person name="Campbell C.S."/>
            <person name="Campbell M.L."/>
            <person name="Chen J."/>
            <person name="Chertkov O."/>
            <person name="Cleland C."/>
            <person name="Dimitrijevic M."/>
            <person name="Doggett N.A."/>
            <person name="Fawcett J.J."/>
            <person name="Glavina T."/>
            <person name="Goodwin L.A."/>
            <person name="Hill K.K."/>
            <person name="Hitchcock P."/>
            <person name="Jackson P.J."/>
            <person name="Keim P."/>
            <person name="Kewalramani A.R."/>
            <person name="Longmire J."/>
            <person name="Lucas S."/>
            <person name="Malfatti S."/>
            <person name="McMurry K."/>
            <person name="Meincke L.J."/>
            <person name="Misra M."/>
            <person name="Moseman B.L."/>
            <person name="Mundt M."/>
            <person name="Munk A.C."/>
            <person name="Okinaka R.T."/>
            <person name="Parson-Quintana B."/>
            <person name="Reilly L.P."/>
            <person name="Richardson P."/>
            <person name="Robinson D.L."/>
            <person name="Rubin E."/>
            <person name="Saunders E."/>
            <person name="Tapia R."/>
            <person name="Tesmer J.G."/>
            <person name="Thayer N."/>
            <person name="Thompson L.S."/>
            <person name="Tice H."/>
            <person name="Ticknor L.O."/>
            <person name="Wills P.L."/>
            <person name="Brettin T.S."/>
            <person name="Gilna P."/>
        </authorList>
    </citation>
    <scope>NUCLEOTIDE SEQUENCE [LARGE SCALE GENOMIC DNA]</scope>
    <source>
        <strain>ZK / E33L</strain>
    </source>
</reference>
<evidence type="ECO:0000255" key="1">
    <source>
        <dbReference type="HAMAP-Rule" id="MF_00532"/>
    </source>
</evidence>
<evidence type="ECO:0000305" key="2"/>
<accession>Q63H57</accession>
<keyword id="KW-0687">Ribonucleoprotein</keyword>
<keyword id="KW-0689">Ribosomal protein</keyword>
<dbReference type="EMBL" id="CP000001">
    <property type="protein sequence ID" value="AAU20094.1"/>
    <property type="molecule type" value="Genomic_DNA"/>
</dbReference>
<dbReference type="RefSeq" id="WP_000079986.1">
    <property type="nucleotide sequence ID" value="NZ_CP009968.1"/>
</dbReference>
<dbReference type="SMR" id="Q63H57"/>
<dbReference type="GeneID" id="93010909"/>
<dbReference type="KEGG" id="bcz:BCE33L0137"/>
<dbReference type="PATRIC" id="fig|288681.22.peg.13"/>
<dbReference type="Proteomes" id="UP000002612">
    <property type="component" value="Chromosome"/>
</dbReference>
<dbReference type="GO" id="GO:0022627">
    <property type="term" value="C:cytosolic small ribosomal subunit"/>
    <property type="evidence" value="ECO:0007669"/>
    <property type="project" value="TreeGrafter"/>
</dbReference>
<dbReference type="GO" id="GO:0003723">
    <property type="term" value="F:RNA binding"/>
    <property type="evidence" value="ECO:0007669"/>
    <property type="project" value="TreeGrafter"/>
</dbReference>
<dbReference type="GO" id="GO:0003735">
    <property type="term" value="F:structural constituent of ribosome"/>
    <property type="evidence" value="ECO:0007669"/>
    <property type="project" value="InterPro"/>
</dbReference>
<dbReference type="GO" id="GO:0006412">
    <property type="term" value="P:translation"/>
    <property type="evidence" value="ECO:0007669"/>
    <property type="project" value="UniProtKB-UniRule"/>
</dbReference>
<dbReference type="FunFam" id="3.30.230.10:FF:000001">
    <property type="entry name" value="30S ribosomal protein S9"/>
    <property type="match status" value="1"/>
</dbReference>
<dbReference type="Gene3D" id="3.30.230.10">
    <property type="match status" value="1"/>
</dbReference>
<dbReference type="HAMAP" id="MF_00532_B">
    <property type="entry name" value="Ribosomal_uS9_B"/>
    <property type="match status" value="1"/>
</dbReference>
<dbReference type="InterPro" id="IPR020568">
    <property type="entry name" value="Ribosomal_Su5_D2-typ_SF"/>
</dbReference>
<dbReference type="InterPro" id="IPR000754">
    <property type="entry name" value="Ribosomal_uS9"/>
</dbReference>
<dbReference type="InterPro" id="IPR023035">
    <property type="entry name" value="Ribosomal_uS9_bac/plastid"/>
</dbReference>
<dbReference type="InterPro" id="IPR020574">
    <property type="entry name" value="Ribosomal_uS9_CS"/>
</dbReference>
<dbReference type="InterPro" id="IPR014721">
    <property type="entry name" value="Ribsml_uS5_D2-typ_fold_subgr"/>
</dbReference>
<dbReference type="NCBIfam" id="NF001099">
    <property type="entry name" value="PRK00132.1"/>
    <property type="match status" value="1"/>
</dbReference>
<dbReference type="PANTHER" id="PTHR21569">
    <property type="entry name" value="RIBOSOMAL PROTEIN S9"/>
    <property type="match status" value="1"/>
</dbReference>
<dbReference type="PANTHER" id="PTHR21569:SF1">
    <property type="entry name" value="SMALL RIBOSOMAL SUBUNIT PROTEIN US9M"/>
    <property type="match status" value="1"/>
</dbReference>
<dbReference type="Pfam" id="PF00380">
    <property type="entry name" value="Ribosomal_S9"/>
    <property type="match status" value="1"/>
</dbReference>
<dbReference type="SUPFAM" id="SSF54211">
    <property type="entry name" value="Ribosomal protein S5 domain 2-like"/>
    <property type="match status" value="1"/>
</dbReference>
<dbReference type="PROSITE" id="PS00360">
    <property type="entry name" value="RIBOSOMAL_S9"/>
    <property type="match status" value="1"/>
</dbReference>
<protein>
    <recommendedName>
        <fullName evidence="1">Small ribosomal subunit protein uS9</fullName>
    </recommendedName>
    <alternativeName>
        <fullName evidence="2">30S ribosomal protein S9</fullName>
    </alternativeName>
</protein>
<feature type="chain" id="PRO_1000051163" description="Small ribosomal subunit protein uS9">
    <location>
        <begin position="1"/>
        <end position="130"/>
    </location>
</feature>
<name>RS9_BACCZ</name>
<sequence>MAQVQYYGTGRRKSSVARVRLVPGEGRVIINGRDFENYIPFAALREVVKQPLVATETLGNYDVLVNVNGGGYTGQAGAIRHGISRALLKADPEYRLTLKRAGLLTRDARMKERKKYGLKGARRAPQFSKR</sequence>
<organism>
    <name type="scientific">Bacillus cereus (strain ZK / E33L)</name>
    <dbReference type="NCBI Taxonomy" id="288681"/>
    <lineage>
        <taxon>Bacteria</taxon>
        <taxon>Bacillati</taxon>
        <taxon>Bacillota</taxon>
        <taxon>Bacilli</taxon>
        <taxon>Bacillales</taxon>
        <taxon>Bacillaceae</taxon>
        <taxon>Bacillus</taxon>
        <taxon>Bacillus cereus group</taxon>
    </lineage>
</organism>
<comment type="similarity">
    <text evidence="1">Belongs to the universal ribosomal protein uS9 family.</text>
</comment>
<proteinExistence type="inferred from homology"/>
<gene>
    <name evidence="1" type="primary">rpsI</name>
    <name type="ordered locus">BCE33L0137</name>
</gene>